<dbReference type="EMBL" id="AY182025">
    <property type="protein sequence ID" value="AAO67546.1"/>
    <property type="molecule type" value="mRNA"/>
</dbReference>
<dbReference type="EMBL" id="AK053345">
    <property type="protein sequence ID" value="BAC35354.1"/>
    <property type="molecule type" value="mRNA"/>
</dbReference>
<dbReference type="EMBL" id="AK053364">
    <property type="protein sequence ID" value="BAC35363.1"/>
    <property type="molecule type" value="mRNA"/>
</dbReference>
<dbReference type="EMBL" id="AK136857">
    <property type="protein sequence ID" value="BAE23148.1"/>
    <property type="molecule type" value="mRNA"/>
</dbReference>
<dbReference type="EMBL" id="BC027803">
    <property type="protein sequence ID" value="AAH27803.1"/>
    <property type="molecule type" value="mRNA"/>
</dbReference>
<dbReference type="CCDS" id="CCDS39522.1"/>
<dbReference type="RefSeq" id="NP_001349038.1">
    <property type="nucleotide sequence ID" value="NM_001362109.1"/>
</dbReference>
<dbReference type="RefSeq" id="NP_083156.2">
    <property type="nucleotide sequence ID" value="NM_028880.3"/>
</dbReference>
<dbReference type="RefSeq" id="XP_006506775.1">
    <property type="nucleotide sequence ID" value="XM_006506712.1"/>
</dbReference>
<dbReference type="RefSeq" id="XP_030111504.1">
    <property type="nucleotide sequence ID" value="XM_030255644.2"/>
</dbReference>
<dbReference type="RefSeq" id="XP_036008264.1">
    <property type="nucleotide sequence ID" value="XM_036152371.1"/>
</dbReference>
<dbReference type="RefSeq" id="XP_036008265.1">
    <property type="nucleotide sequence ID" value="XM_036152372.1"/>
</dbReference>
<dbReference type="RefSeq" id="XP_036008266.1">
    <property type="nucleotide sequence ID" value="XM_036152373.1"/>
</dbReference>
<dbReference type="SMR" id="Q8K377"/>
<dbReference type="BioGRID" id="216677">
    <property type="interactions" value="3"/>
</dbReference>
<dbReference type="FunCoup" id="Q8K377">
    <property type="interactions" value="185"/>
</dbReference>
<dbReference type="IntAct" id="Q8K377">
    <property type="interactions" value="3"/>
</dbReference>
<dbReference type="MINT" id="Q8K377"/>
<dbReference type="STRING" id="10090.ENSMUSP00000125207"/>
<dbReference type="GlyCosmos" id="Q8K377">
    <property type="glycosylation" value="4 sites, No reported glycans"/>
</dbReference>
<dbReference type="GlyGen" id="Q8K377">
    <property type="glycosylation" value="6 sites, 1 N-linked glycan (1 site), 1 O-linked glycan (1 site)"/>
</dbReference>
<dbReference type="PhosphoSitePlus" id="Q8K377"/>
<dbReference type="SwissPalm" id="Q8K377"/>
<dbReference type="PaxDb" id="10090-ENSMUSP00000125207"/>
<dbReference type="PeptideAtlas" id="Q8K377"/>
<dbReference type="ProteomicsDB" id="252530"/>
<dbReference type="Antibodypedia" id="47487">
    <property type="antibodies" value="245 antibodies from 28 providers"/>
</dbReference>
<dbReference type="DNASU" id="74342"/>
<dbReference type="Ensembl" id="ENSMUST00000020400.5">
    <property type="protein sequence ID" value="ENSMUSP00000020400.5"/>
    <property type="gene ID" value="ENSMUSG00000060780.3"/>
</dbReference>
<dbReference type="Ensembl" id="ENSMUST00000159616.2">
    <property type="protein sequence ID" value="ENSMUSP00000125207.2"/>
    <property type="gene ID" value="ENSMUSG00000060780.3"/>
</dbReference>
<dbReference type="Ensembl" id="ENSMUST00000161677.2">
    <property type="protein sequence ID" value="ENSMUSP00000124373.2"/>
    <property type="gene ID" value="ENSMUSG00000060780.3"/>
</dbReference>
<dbReference type="GeneID" id="74342"/>
<dbReference type="KEGG" id="mmu:74342"/>
<dbReference type="UCSC" id="uc009cjt.1">
    <property type="organism name" value="mouse"/>
</dbReference>
<dbReference type="AGR" id="MGI:2389173"/>
<dbReference type="CTD" id="347730"/>
<dbReference type="MGI" id="MGI:2389173">
    <property type="gene designation" value="Lrrtm1"/>
</dbReference>
<dbReference type="VEuPathDB" id="HostDB:ENSMUSG00000060780"/>
<dbReference type="eggNOG" id="KOG0619">
    <property type="taxonomic scope" value="Eukaryota"/>
</dbReference>
<dbReference type="GeneTree" id="ENSGT00940000161705"/>
<dbReference type="HOGENOM" id="CLU_032965_0_0_1"/>
<dbReference type="InParanoid" id="Q8K377"/>
<dbReference type="OMA" id="FHLCEDA"/>
<dbReference type="OrthoDB" id="5984255at2759"/>
<dbReference type="PhylomeDB" id="Q8K377"/>
<dbReference type="TreeFam" id="TF332659"/>
<dbReference type="Reactome" id="R-MMU-6794361">
    <property type="pathway name" value="Neurexins and neuroligins"/>
</dbReference>
<dbReference type="BioGRID-ORCS" id="74342">
    <property type="hits" value="1 hit in 75 CRISPR screens"/>
</dbReference>
<dbReference type="CD-CODE" id="CE726F99">
    <property type="entry name" value="Postsynaptic density"/>
</dbReference>
<dbReference type="ChiTaRS" id="Lrrtm1">
    <property type="organism name" value="mouse"/>
</dbReference>
<dbReference type="PRO" id="PR:Q8K377"/>
<dbReference type="Proteomes" id="UP000000589">
    <property type="component" value="Chromosome 6"/>
</dbReference>
<dbReference type="RNAct" id="Q8K377">
    <property type="molecule type" value="protein"/>
</dbReference>
<dbReference type="Bgee" id="ENSMUSG00000060780">
    <property type="expression patterns" value="Expressed in lateral geniculate body and 208 other cell types or tissues"/>
</dbReference>
<dbReference type="ExpressionAtlas" id="Q8K377">
    <property type="expression patterns" value="baseline and differential"/>
</dbReference>
<dbReference type="GO" id="GO:0005783">
    <property type="term" value="C:endoplasmic reticulum"/>
    <property type="evidence" value="ECO:0007669"/>
    <property type="project" value="Ensembl"/>
</dbReference>
<dbReference type="GO" id="GO:0060076">
    <property type="term" value="C:excitatory synapse"/>
    <property type="evidence" value="ECO:0000266"/>
    <property type="project" value="MGI"/>
</dbReference>
<dbReference type="GO" id="GO:0098982">
    <property type="term" value="C:GABA-ergic synapse"/>
    <property type="evidence" value="ECO:0007669"/>
    <property type="project" value="Ensembl"/>
</dbReference>
<dbReference type="GO" id="GO:0030426">
    <property type="term" value="C:growth cone"/>
    <property type="evidence" value="ECO:0007669"/>
    <property type="project" value="Ensembl"/>
</dbReference>
<dbReference type="GO" id="GO:0016020">
    <property type="term" value="C:membrane"/>
    <property type="evidence" value="ECO:0000250"/>
    <property type="project" value="MGI"/>
</dbReference>
<dbReference type="GO" id="GO:0099634">
    <property type="term" value="C:postsynaptic specialization membrane"/>
    <property type="evidence" value="ECO:0007669"/>
    <property type="project" value="Ensembl"/>
</dbReference>
<dbReference type="GO" id="GO:0051649">
    <property type="term" value="P:establishment of localization in cell"/>
    <property type="evidence" value="ECO:0000316"/>
    <property type="project" value="MGI"/>
</dbReference>
<dbReference type="GO" id="GO:0035640">
    <property type="term" value="P:exploration behavior"/>
    <property type="evidence" value="ECO:0000315"/>
    <property type="project" value="MGI"/>
</dbReference>
<dbReference type="GO" id="GO:0007626">
    <property type="term" value="P:locomotory behavior"/>
    <property type="evidence" value="ECO:0000315"/>
    <property type="project" value="MGI"/>
</dbReference>
<dbReference type="GO" id="GO:0060291">
    <property type="term" value="P:long-term synaptic potentiation"/>
    <property type="evidence" value="ECO:0000316"/>
    <property type="project" value="MGI"/>
</dbReference>
<dbReference type="GO" id="GO:0002091">
    <property type="term" value="P:negative regulation of receptor internalization"/>
    <property type="evidence" value="ECO:0000316"/>
    <property type="project" value="MGI"/>
</dbReference>
<dbReference type="GO" id="GO:0051965">
    <property type="term" value="P:positive regulation of synapse assembly"/>
    <property type="evidence" value="ECO:0000314"/>
    <property type="project" value="MGI"/>
</dbReference>
<dbReference type="GO" id="GO:0035418">
    <property type="term" value="P:protein localization to synapse"/>
    <property type="evidence" value="ECO:0000315"/>
    <property type="project" value="MGI"/>
</dbReference>
<dbReference type="GO" id="GO:0031623">
    <property type="term" value="P:receptor internalization"/>
    <property type="evidence" value="ECO:0000316"/>
    <property type="project" value="MGI"/>
</dbReference>
<dbReference type="GO" id="GO:0050808">
    <property type="term" value="P:synapse organization"/>
    <property type="evidence" value="ECO:0000315"/>
    <property type="project" value="MGI"/>
</dbReference>
<dbReference type="FunFam" id="3.80.10.10:FF:000005">
    <property type="entry name" value="leucine-rich repeat transmembrane neuronal protein 4"/>
    <property type="match status" value="1"/>
</dbReference>
<dbReference type="Gene3D" id="3.80.10.10">
    <property type="entry name" value="Ribonuclease Inhibitor"/>
    <property type="match status" value="1"/>
</dbReference>
<dbReference type="InterPro" id="IPR001611">
    <property type="entry name" value="Leu-rich_rpt"/>
</dbReference>
<dbReference type="InterPro" id="IPR003591">
    <property type="entry name" value="Leu-rich_rpt_typical-subtyp"/>
</dbReference>
<dbReference type="InterPro" id="IPR050467">
    <property type="entry name" value="LRFN"/>
</dbReference>
<dbReference type="InterPro" id="IPR032675">
    <property type="entry name" value="LRR_dom_sf"/>
</dbReference>
<dbReference type="PANTHER" id="PTHR45842:SF12">
    <property type="entry name" value="KEKKON 5, ISOFORM A"/>
    <property type="match status" value="1"/>
</dbReference>
<dbReference type="PANTHER" id="PTHR45842">
    <property type="entry name" value="SYNAPTIC ADHESION-LIKE MOLECULE SALM"/>
    <property type="match status" value="1"/>
</dbReference>
<dbReference type="Pfam" id="PF13855">
    <property type="entry name" value="LRR_8"/>
    <property type="match status" value="3"/>
</dbReference>
<dbReference type="SMART" id="SM00369">
    <property type="entry name" value="LRR_TYP"/>
    <property type="match status" value="9"/>
</dbReference>
<dbReference type="SUPFAM" id="SSF52058">
    <property type="entry name" value="L domain-like"/>
    <property type="match status" value="1"/>
</dbReference>
<dbReference type="PROSITE" id="PS51450">
    <property type="entry name" value="LRR"/>
    <property type="match status" value="9"/>
</dbReference>
<comment type="function">
    <text evidence="1">Exhibits strong synaptogenic activity, restricted to excitatory presynaptic differentiation, acting at both pre- and postsynaptic level.</text>
</comment>
<comment type="subcellular location">
    <subcellularLocation>
        <location evidence="1">Cell membrane</location>
        <topology evidence="1">Single-pass type I membrane protein</topology>
    </subcellularLocation>
    <subcellularLocation>
        <location evidence="1">Postsynaptic cell membrane</location>
        <topology evidence="1">Single-pass type I membrane protein</topology>
    </subcellularLocation>
    <text evidence="5 7">Accumulates extensively in the endoplasmic reticulum of transfected nonneuronal cells.</text>
</comment>
<comment type="tissue specificity">
    <text evidence="3 5">Expressed predominantly in the nervous system by postmitotic neurons, but also in some non-neuronal tissues. In adult brain expression is most prominent in the forebraain, particularly in the thalamus and in the cortical areas including hippocampus, piriform and posterior cingulate.</text>
</comment>
<comment type="developmental stage">
    <text evidence="4">Initially detected at 9 dpc with expression present in the overlying ectoderm of the limb bud in the presumptive apical ectodermal ridge. Expression is also seen in the dorsal otic vesicle in the presumptive endolymphatic appendage. Neural expression is present in the forebrain and midbrain with a sharp boundary across the central midbrain. Expression is also seen in the hindbrain. A stripe of expression can be detected in the neural tube. At 10 and 11 dpc expression is restricted to the apical ectodermal ridge. Expression persists in the endolymphatic diverticular appendage of the otic vesicle the forebrain/midbrain and the ventricular layer of the central neural tube through these stages.</text>
</comment>
<comment type="disruption phenotype">
    <text evidence="6">Mutant animals survive in the expected Mendelian ratios, are fertile and display no overt phenotype. Brain morphology appears grossly normal, except for rare cases of anomalous ventroculomegaly. Increase in the presynaptic area occupied by SLC17A7/VGLUT1 in some strata of the hippocampal neuropil of the CA1 region.</text>
</comment>
<comment type="similarity">
    <text evidence="8">Belongs to the LRRTM family.</text>
</comment>
<comment type="online information" name="Protein Spotlight">
    <link uri="https://www.proteinspotlight.org/back_issues/091"/>
    <text>The hands to say it - Issue 91 of February 2008</text>
</comment>
<keyword id="KW-1003">Cell membrane</keyword>
<keyword id="KW-0325">Glycoprotein</keyword>
<keyword id="KW-0433">Leucine-rich repeat</keyword>
<keyword id="KW-0472">Membrane</keyword>
<keyword id="KW-0628">Postsynaptic cell membrane</keyword>
<keyword id="KW-1185">Reference proteome</keyword>
<keyword id="KW-0677">Repeat</keyword>
<keyword id="KW-0732">Signal</keyword>
<keyword id="KW-0770">Synapse</keyword>
<keyword id="KW-0812">Transmembrane</keyword>
<keyword id="KW-1133">Transmembrane helix</keyword>
<protein>
    <recommendedName>
        <fullName>Leucine-rich repeat transmembrane neuronal protein 1</fullName>
    </recommendedName>
</protein>
<reference key="1">
    <citation type="journal article" date="2003" name="Genomics">
        <title>A novel gene family encoding leucine-rich repeat transmembrane proteins differentially expressed in the nervous system.</title>
        <authorList>
            <person name="Lauren J."/>
            <person name="Airaksinen M.S."/>
            <person name="Saarma M."/>
            <person name="Timmusk T.T."/>
        </authorList>
    </citation>
    <scope>NUCLEOTIDE SEQUENCE [MRNA]</scope>
    <scope>TISSUE SPECIFICITY</scope>
    <source>
        <strain>C57BL/6J</strain>
    </source>
</reference>
<reference key="2">
    <citation type="journal article" date="2005" name="Science">
        <title>The transcriptional landscape of the mammalian genome.</title>
        <authorList>
            <person name="Carninci P."/>
            <person name="Kasukawa T."/>
            <person name="Katayama S."/>
            <person name="Gough J."/>
            <person name="Frith M.C."/>
            <person name="Maeda N."/>
            <person name="Oyama R."/>
            <person name="Ravasi T."/>
            <person name="Lenhard B."/>
            <person name="Wells C."/>
            <person name="Kodzius R."/>
            <person name="Shimokawa K."/>
            <person name="Bajic V.B."/>
            <person name="Brenner S.E."/>
            <person name="Batalov S."/>
            <person name="Forrest A.R."/>
            <person name="Zavolan M."/>
            <person name="Davis M.J."/>
            <person name="Wilming L.G."/>
            <person name="Aidinis V."/>
            <person name="Allen J.E."/>
            <person name="Ambesi-Impiombato A."/>
            <person name="Apweiler R."/>
            <person name="Aturaliya R.N."/>
            <person name="Bailey T.L."/>
            <person name="Bansal M."/>
            <person name="Baxter L."/>
            <person name="Beisel K.W."/>
            <person name="Bersano T."/>
            <person name="Bono H."/>
            <person name="Chalk A.M."/>
            <person name="Chiu K.P."/>
            <person name="Choudhary V."/>
            <person name="Christoffels A."/>
            <person name="Clutterbuck D.R."/>
            <person name="Crowe M.L."/>
            <person name="Dalla E."/>
            <person name="Dalrymple B.P."/>
            <person name="de Bono B."/>
            <person name="Della Gatta G."/>
            <person name="di Bernardo D."/>
            <person name="Down T."/>
            <person name="Engstrom P."/>
            <person name="Fagiolini M."/>
            <person name="Faulkner G."/>
            <person name="Fletcher C.F."/>
            <person name="Fukushima T."/>
            <person name="Furuno M."/>
            <person name="Futaki S."/>
            <person name="Gariboldi M."/>
            <person name="Georgii-Hemming P."/>
            <person name="Gingeras T.R."/>
            <person name="Gojobori T."/>
            <person name="Green R.E."/>
            <person name="Gustincich S."/>
            <person name="Harbers M."/>
            <person name="Hayashi Y."/>
            <person name="Hensch T.K."/>
            <person name="Hirokawa N."/>
            <person name="Hill D."/>
            <person name="Huminiecki L."/>
            <person name="Iacono M."/>
            <person name="Ikeo K."/>
            <person name="Iwama A."/>
            <person name="Ishikawa T."/>
            <person name="Jakt M."/>
            <person name="Kanapin A."/>
            <person name="Katoh M."/>
            <person name="Kawasawa Y."/>
            <person name="Kelso J."/>
            <person name="Kitamura H."/>
            <person name="Kitano H."/>
            <person name="Kollias G."/>
            <person name="Krishnan S.P."/>
            <person name="Kruger A."/>
            <person name="Kummerfeld S.K."/>
            <person name="Kurochkin I.V."/>
            <person name="Lareau L.F."/>
            <person name="Lazarevic D."/>
            <person name="Lipovich L."/>
            <person name="Liu J."/>
            <person name="Liuni S."/>
            <person name="McWilliam S."/>
            <person name="Madan Babu M."/>
            <person name="Madera M."/>
            <person name="Marchionni L."/>
            <person name="Matsuda H."/>
            <person name="Matsuzawa S."/>
            <person name="Miki H."/>
            <person name="Mignone F."/>
            <person name="Miyake S."/>
            <person name="Morris K."/>
            <person name="Mottagui-Tabar S."/>
            <person name="Mulder N."/>
            <person name="Nakano N."/>
            <person name="Nakauchi H."/>
            <person name="Ng P."/>
            <person name="Nilsson R."/>
            <person name="Nishiguchi S."/>
            <person name="Nishikawa S."/>
            <person name="Nori F."/>
            <person name="Ohara O."/>
            <person name="Okazaki Y."/>
            <person name="Orlando V."/>
            <person name="Pang K.C."/>
            <person name="Pavan W.J."/>
            <person name="Pavesi G."/>
            <person name="Pesole G."/>
            <person name="Petrovsky N."/>
            <person name="Piazza S."/>
            <person name="Reed J."/>
            <person name="Reid J.F."/>
            <person name="Ring B.Z."/>
            <person name="Ringwald M."/>
            <person name="Rost B."/>
            <person name="Ruan Y."/>
            <person name="Salzberg S.L."/>
            <person name="Sandelin A."/>
            <person name="Schneider C."/>
            <person name="Schoenbach C."/>
            <person name="Sekiguchi K."/>
            <person name="Semple C.A."/>
            <person name="Seno S."/>
            <person name="Sessa L."/>
            <person name="Sheng Y."/>
            <person name="Shibata Y."/>
            <person name="Shimada H."/>
            <person name="Shimada K."/>
            <person name="Silva D."/>
            <person name="Sinclair B."/>
            <person name="Sperling S."/>
            <person name="Stupka E."/>
            <person name="Sugiura K."/>
            <person name="Sultana R."/>
            <person name="Takenaka Y."/>
            <person name="Taki K."/>
            <person name="Tammoja K."/>
            <person name="Tan S.L."/>
            <person name="Tang S."/>
            <person name="Taylor M.S."/>
            <person name="Tegner J."/>
            <person name="Teichmann S.A."/>
            <person name="Ueda H.R."/>
            <person name="van Nimwegen E."/>
            <person name="Verardo R."/>
            <person name="Wei C.L."/>
            <person name="Yagi K."/>
            <person name="Yamanishi H."/>
            <person name="Zabarovsky E."/>
            <person name="Zhu S."/>
            <person name="Zimmer A."/>
            <person name="Hide W."/>
            <person name="Bult C."/>
            <person name="Grimmond S.M."/>
            <person name="Teasdale R.D."/>
            <person name="Liu E.T."/>
            <person name="Brusic V."/>
            <person name="Quackenbush J."/>
            <person name="Wahlestedt C."/>
            <person name="Mattick J.S."/>
            <person name="Hume D.A."/>
            <person name="Kai C."/>
            <person name="Sasaki D."/>
            <person name="Tomaru Y."/>
            <person name="Fukuda S."/>
            <person name="Kanamori-Katayama M."/>
            <person name="Suzuki M."/>
            <person name="Aoki J."/>
            <person name="Arakawa T."/>
            <person name="Iida J."/>
            <person name="Imamura K."/>
            <person name="Itoh M."/>
            <person name="Kato T."/>
            <person name="Kawaji H."/>
            <person name="Kawagashira N."/>
            <person name="Kawashima T."/>
            <person name="Kojima M."/>
            <person name="Kondo S."/>
            <person name="Konno H."/>
            <person name="Nakano K."/>
            <person name="Ninomiya N."/>
            <person name="Nishio T."/>
            <person name="Okada M."/>
            <person name="Plessy C."/>
            <person name="Shibata K."/>
            <person name="Shiraki T."/>
            <person name="Suzuki S."/>
            <person name="Tagami M."/>
            <person name="Waki K."/>
            <person name="Watahiki A."/>
            <person name="Okamura-Oho Y."/>
            <person name="Suzuki H."/>
            <person name="Kawai J."/>
            <person name="Hayashizaki Y."/>
        </authorList>
    </citation>
    <scope>NUCLEOTIDE SEQUENCE [LARGE SCALE MRNA]</scope>
    <source>
        <strain>C57BL/6J</strain>
        <tissue>Diencephalon</tissue>
        <tissue>Eye</tissue>
    </source>
</reference>
<reference key="3">
    <citation type="journal article" date="2004" name="Genome Res.">
        <title>The status, quality, and expansion of the NIH full-length cDNA project: the Mammalian Gene Collection (MGC).</title>
        <authorList>
            <consortium name="The MGC Project Team"/>
        </authorList>
    </citation>
    <scope>NUCLEOTIDE SEQUENCE [LARGE SCALE MRNA]</scope>
    <source>
        <strain>FVB/N</strain>
        <tissue>Mammary tumor</tissue>
    </source>
</reference>
<reference key="4">
    <citation type="journal article" date="2007" name="Gene Expr. Patterns">
        <title>Developmentally regulated expression of the LRRTM gene family during mid-gestation mouse embryogenesis.</title>
        <authorList>
            <person name="Haines B.P."/>
            <person name="Rigby P.W.J."/>
        </authorList>
    </citation>
    <scope>DEVELOPMENTAL STAGE</scope>
</reference>
<reference key="5">
    <citation type="journal article" date="2007" name="Mol. Psychiatry">
        <title>LRRTM1 protein is located in the endoplasmic reticulum (ER) in mammalian cells.</title>
        <authorList>
            <person name="Francks C."/>
            <person name="Maegawa S."/>
            <person name="Lauren J."/>
            <person name="Abrahams B.S."/>
            <person name="Velayos-Baeza A."/>
            <person name="Medland S.E."/>
            <person name="Colella S."/>
            <person name="Groszer M."/>
            <person name="McAuley E.Z."/>
            <person name="Caffrey T.M."/>
            <person name="Timmusk T."/>
            <person name="Pruunsild P."/>
            <person name="Koppel I."/>
            <person name="Lind P.A."/>
            <person name="Matsumoto-Itaba N."/>
            <person name="Nicod J."/>
            <person name="Xiong L."/>
            <person name="Joober R."/>
            <person name="Enard W."/>
            <person name="Krinsky B."/>
            <person name="Nanba E."/>
            <person name="Richardson A.J."/>
            <person name="Riley B.P."/>
            <person name="Martin N.G."/>
            <person name="Strittmatter S.M."/>
            <person name="Moeller H.J."/>
            <person name="Rujescu D."/>
            <person name="St Clair D."/>
            <person name="Muglia P."/>
            <person name="Roos J.L."/>
            <person name="Fisher S.E."/>
            <person name="Wade-Martins R."/>
            <person name="Rouleau G.A."/>
            <person name="Stein J.F."/>
            <person name="Karayiorgou M."/>
            <person name="Geschwind D.H."/>
            <person name="Ragoussis J."/>
            <person name="Kendler K.S."/>
            <person name="Airaksinen M.S."/>
            <person name="Oshimura M."/>
            <person name="DeLisi L.E."/>
            <person name="Monaco A.P."/>
        </authorList>
    </citation>
    <scope>SUBCELLULAR LOCATION</scope>
</reference>
<reference key="6">
    <citation type="journal article" date="2007" name="Mol. Psychiatry">
        <title>LRRTM1 on chromosome 2p12 is a maternally suppressed gene that is associated paternally with handedness and schizophrenia.</title>
        <authorList>
            <person name="Francks C."/>
            <person name="Maegawa S."/>
            <person name="Lauren J."/>
            <person name="Abrahams B.S."/>
            <person name="Velayos-Baeza A."/>
            <person name="Medland S.E."/>
            <person name="Colella S."/>
            <person name="Groszer M."/>
            <person name="McAuley E.Z."/>
            <person name="Caffrey T.M."/>
            <person name="Timmusk T."/>
            <person name="Pruunsild P."/>
            <person name="Koppel I."/>
            <person name="Lind P.A."/>
            <person name="Matsumoto-Itaba N."/>
            <person name="Nicod J."/>
            <person name="Xiong L."/>
            <person name="Joober R."/>
            <person name="Enard W."/>
            <person name="Krinsky B."/>
            <person name="Nanba E."/>
            <person name="Richardson A.J."/>
            <person name="Riley B.P."/>
            <person name="Martin N.G."/>
            <person name="Strittmatter S.M."/>
            <person name="Moeller H.J."/>
            <person name="Rujescu D."/>
            <person name="St Clair D."/>
            <person name="Muglia P."/>
            <person name="Roos J.L."/>
            <person name="Fisher S.E."/>
            <person name="Wade-Martins R."/>
            <person name="Rouleau G.A."/>
            <person name="Stein J.F."/>
            <person name="Karayiorgou M."/>
            <person name="Geschwind D.H."/>
            <person name="Ragoussis J."/>
            <person name="Kendler K.S."/>
            <person name="Airaksinen M.S."/>
            <person name="Oshimura M."/>
            <person name="DeLisi L.E."/>
            <person name="Monaco A.P."/>
        </authorList>
    </citation>
    <scope>TISSUE SPECIFICITY</scope>
    <scope>SUBCELLULAR LOCATION</scope>
</reference>
<reference key="7">
    <citation type="journal article" date="2009" name="Neuron">
        <title>An unbiased expression screen for synaptogenic proteins identifies the LRRTM protein family as synaptic organizers.</title>
        <authorList>
            <person name="Linhoff M.W."/>
            <person name="Lauren J."/>
            <person name="Cassidy R.M."/>
            <person name="Dobie F.A."/>
            <person name="Takahashi H."/>
            <person name="Nygaard H.B."/>
            <person name="Airaksinen M.S."/>
            <person name="Strittmatter S.M."/>
            <person name="Craig A.M."/>
        </authorList>
    </citation>
    <scope>DISRUPTION PHENOTYPE</scope>
</reference>
<gene>
    <name type="primary">Lrrtm1</name>
</gene>
<evidence type="ECO:0000250" key="1"/>
<evidence type="ECO:0000255" key="2"/>
<evidence type="ECO:0000269" key="3">
    <source>
    </source>
</evidence>
<evidence type="ECO:0000269" key="4">
    <source>
    </source>
</evidence>
<evidence type="ECO:0000269" key="5">
    <source>
    </source>
</evidence>
<evidence type="ECO:0000269" key="6">
    <source>
    </source>
</evidence>
<evidence type="ECO:0000269" key="7">
    <source ref="5"/>
</evidence>
<evidence type="ECO:0000305" key="8"/>
<proteinExistence type="evidence at transcript level"/>
<name>LRRT1_MOUSE</name>
<accession>Q8K377</accession>
<accession>Q3UVX1</accession>
<organism>
    <name type="scientific">Mus musculus</name>
    <name type="common">Mouse</name>
    <dbReference type="NCBI Taxonomy" id="10090"/>
    <lineage>
        <taxon>Eukaryota</taxon>
        <taxon>Metazoa</taxon>
        <taxon>Chordata</taxon>
        <taxon>Craniata</taxon>
        <taxon>Vertebrata</taxon>
        <taxon>Euteleostomi</taxon>
        <taxon>Mammalia</taxon>
        <taxon>Eutheria</taxon>
        <taxon>Euarchontoglires</taxon>
        <taxon>Glires</taxon>
        <taxon>Rodentia</taxon>
        <taxon>Myomorpha</taxon>
        <taxon>Muroidea</taxon>
        <taxon>Muridae</taxon>
        <taxon>Murinae</taxon>
        <taxon>Mus</taxon>
        <taxon>Mus</taxon>
    </lineage>
</organism>
<sequence length="522" mass="58718">MDFLLLGLCLHWLLRRPSGVVLCLLGACFQMLPAAPSGCPGQCRCEGRLLYCEALNLTEAPHNLSGLLGLSLRYNSLSELRAGQFTGLMQLTWLYLDHNHICSVQGDAFQKLRRVKELTLSSNQITELANTTFRPMPNLRSVDLSYNKLQALAPDLFHGLRKLTTLHMRANAIQFVPVRIFQDCRSLKFLDIGYNQLKSLARNSFAGLFKLTELHLEHNDLIKVNFAHFPRLISLHSLCLRRNKVAIVVSSLDWVWNLEKMDLSGNEIEYMEPHVFETVPYLQTLQLDSNRLTYIEPRILNSWKSLTSITLAGNLWDCGRNVCALASWLSNFQGRYDANLQCASPEYAQGEDVLDAVYAFHLCEDGAEPTSGHLLSVAVTNRSDLTPPESSATTLVDGGEGHDGTFEPITVALPGGEHAENAVQIHKVVTGTMALIFSFLIVVLVLYVSWKCFPASLRQLRQCFVTQRRKQKQKQTMHQMAAMSAQEYYVDYKPNHIEGALVIINEYGSCTCHQQPARECEV</sequence>
<feature type="signal peptide" evidence="2">
    <location>
        <begin position="1"/>
        <end position="34"/>
    </location>
</feature>
<feature type="chain" id="PRO_0000018351" description="Leucine-rich repeat transmembrane neuronal protein 1">
    <location>
        <begin position="35"/>
        <end position="522"/>
    </location>
</feature>
<feature type="topological domain" description="Extracellular" evidence="2">
    <location>
        <begin position="35"/>
        <end position="427"/>
    </location>
</feature>
<feature type="transmembrane region" description="Helical" evidence="2">
    <location>
        <begin position="428"/>
        <end position="448"/>
    </location>
</feature>
<feature type="topological domain" description="Cytoplasmic" evidence="2">
    <location>
        <begin position="449"/>
        <end position="522"/>
    </location>
</feature>
<feature type="domain" description="LRRNT">
    <location>
        <begin position="35"/>
        <end position="63"/>
    </location>
</feature>
<feature type="repeat" description="LRR 1">
    <location>
        <begin position="64"/>
        <end position="87"/>
    </location>
</feature>
<feature type="repeat" description="LRR 2">
    <location>
        <begin position="89"/>
        <end position="111"/>
    </location>
</feature>
<feature type="repeat" description="LRR 3">
    <location>
        <begin position="112"/>
        <end position="135"/>
    </location>
</feature>
<feature type="repeat" description="LRR 4">
    <location>
        <begin position="136"/>
        <end position="159"/>
    </location>
</feature>
<feature type="repeat" description="LRR 5">
    <location>
        <begin position="161"/>
        <end position="183"/>
    </location>
</feature>
<feature type="repeat" description="LRR 6">
    <location>
        <begin position="184"/>
        <end position="207"/>
    </location>
</feature>
<feature type="repeat" description="LRR 7">
    <location>
        <begin position="209"/>
        <end position="231"/>
    </location>
</feature>
<feature type="repeat" description="LRR 8">
    <location>
        <begin position="233"/>
        <end position="255"/>
    </location>
</feature>
<feature type="repeat" description="LRR 9">
    <location>
        <begin position="256"/>
        <end position="278"/>
    </location>
</feature>
<feature type="repeat" description="LRR 10">
    <location>
        <begin position="280"/>
        <end position="302"/>
    </location>
</feature>
<feature type="domain" description="LRRCT">
    <location>
        <begin position="314"/>
        <end position="365"/>
    </location>
</feature>
<feature type="glycosylation site" description="N-linked (GlcNAc...) asparagine" evidence="2">
    <location>
        <position position="56"/>
    </location>
</feature>
<feature type="glycosylation site" description="N-linked (GlcNAc...) asparagine" evidence="2">
    <location>
        <position position="63"/>
    </location>
</feature>
<feature type="glycosylation site" description="N-linked (GlcNAc...) asparagine" evidence="2">
    <location>
        <position position="130"/>
    </location>
</feature>
<feature type="glycosylation site" description="N-linked (GlcNAc...) asparagine" evidence="2">
    <location>
        <position position="381"/>
    </location>
</feature>